<reference key="1">
    <citation type="submission" date="2007-12" db="EMBL/GenBank/DDBJ databases">
        <title>Complete sequence of chromosome of Francisella philomiragia subsp. philomiragia ATCC 25017.</title>
        <authorList>
            <consortium name="US DOE Joint Genome Institute"/>
            <person name="Copeland A."/>
            <person name="Lucas S."/>
            <person name="Lapidus A."/>
            <person name="Barry K."/>
            <person name="Detter J.C."/>
            <person name="Glavina del Rio T."/>
            <person name="Hammon N."/>
            <person name="Israni S."/>
            <person name="Dalin E."/>
            <person name="Tice H."/>
            <person name="Pitluck S."/>
            <person name="Chain P."/>
            <person name="Malfatti S."/>
            <person name="Shin M."/>
            <person name="Vergez L."/>
            <person name="Schmutz J."/>
            <person name="Larimer F."/>
            <person name="Land M."/>
            <person name="Hauser L."/>
            <person name="Richardson P."/>
        </authorList>
    </citation>
    <scope>NUCLEOTIDE SEQUENCE [LARGE SCALE GENOMIC DNA]</scope>
    <source>
        <strain>ATCC 25017 / CCUG 19701 / FSC 153 / O#319-036</strain>
    </source>
</reference>
<proteinExistence type="inferred from homology"/>
<feature type="chain" id="PRO_1000085365" description="tRNA(Ile)-lysidine synthase">
    <location>
        <begin position="1"/>
        <end position="400"/>
    </location>
</feature>
<feature type="binding site" evidence="1">
    <location>
        <begin position="25"/>
        <end position="30"/>
    </location>
    <ligand>
        <name>ATP</name>
        <dbReference type="ChEBI" id="CHEBI:30616"/>
    </ligand>
</feature>
<dbReference type="EC" id="6.3.4.19" evidence="1"/>
<dbReference type="EMBL" id="CP000937">
    <property type="protein sequence ID" value="ABZ87655.1"/>
    <property type="molecule type" value="Genomic_DNA"/>
</dbReference>
<dbReference type="SMR" id="B0TYH9"/>
<dbReference type="KEGG" id="fph:Fphi_1430"/>
<dbReference type="eggNOG" id="COG0037">
    <property type="taxonomic scope" value="Bacteria"/>
</dbReference>
<dbReference type="HOGENOM" id="CLU_018869_2_0_6"/>
<dbReference type="GO" id="GO:0005737">
    <property type="term" value="C:cytoplasm"/>
    <property type="evidence" value="ECO:0007669"/>
    <property type="project" value="UniProtKB-SubCell"/>
</dbReference>
<dbReference type="GO" id="GO:0005524">
    <property type="term" value="F:ATP binding"/>
    <property type="evidence" value="ECO:0007669"/>
    <property type="project" value="UniProtKB-UniRule"/>
</dbReference>
<dbReference type="GO" id="GO:0032267">
    <property type="term" value="F:tRNA(Ile)-lysidine synthase activity"/>
    <property type="evidence" value="ECO:0007669"/>
    <property type="project" value="UniProtKB-EC"/>
</dbReference>
<dbReference type="GO" id="GO:0006400">
    <property type="term" value="P:tRNA modification"/>
    <property type="evidence" value="ECO:0007669"/>
    <property type="project" value="UniProtKB-UniRule"/>
</dbReference>
<dbReference type="CDD" id="cd01992">
    <property type="entry name" value="TilS_N"/>
    <property type="match status" value="1"/>
</dbReference>
<dbReference type="Gene3D" id="1.20.59.20">
    <property type="match status" value="1"/>
</dbReference>
<dbReference type="Gene3D" id="3.40.50.620">
    <property type="entry name" value="HUPs"/>
    <property type="match status" value="1"/>
</dbReference>
<dbReference type="HAMAP" id="MF_01161">
    <property type="entry name" value="tRNA_Ile_lys_synt"/>
    <property type="match status" value="1"/>
</dbReference>
<dbReference type="InterPro" id="IPR012796">
    <property type="entry name" value="Lysidine-tRNA-synth_C"/>
</dbReference>
<dbReference type="InterPro" id="IPR014729">
    <property type="entry name" value="Rossmann-like_a/b/a_fold"/>
</dbReference>
<dbReference type="InterPro" id="IPR011063">
    <property type="entry name" value="TilS/TtcA_N"/>
</dbReference>
<dbReference type="InterPro" id="IPR012094">
    <property type="entry name" value="tRNA_Ile_lys_synt"/>
</dbReference>
<dbReference type="InterPro" id="IPR012795">
    <property type="entry name" value="tRNA_Ile_lys_synt_N"/>
</dbReference>
<dbReference type="InterPro" id="IPR015262">
    <property type="entry name" value="tRNA_Ile_lys_synt_subst-bd"/>
</dbReference>
<dbReference type="NCBIfam" id="TIGR02433">
    <property type="entry name" value="lysidine_TilS_C"/>
    <property type="match status" value="1"/>
</dbReference>
<dbReference type="NCBIfam" id="TIGR02432">
    <property type="entry name" value="lysidine_TilS_N"/>
    <property type="match status" value="1"/>
</dbReference>
<dbReference type="PANTHER" id="PTHR43033">
    <property type="entry name" value="TRNA(ILE)-LYSIDINE SYNTHASE-RELATED"/>
    <property type="match status" value="1"/>
</dbReference>
<dbReference type="PANTHER" id="PTHR43033:SF1">
    <property type="entry name" value="TRNA(ILE)-LYSIDINE SYNTHASE-RELATED"/>
    <property type="match status" value="1"/>
</dbReference>
<dbReference type="Pfam" id="PF01171">
    <property type="entry name" value="ATP_bind_3"/>
    <property type="match status" value="1"/>
</dbReference>
<dbReference type="Pfam" id="PF09179">
    <property type="entry name" value="TilS"/>
    <property type="match status" value="1"/>
</dbReference>
<dbReference type="Pfam" id="PF11734">
    <property type="entry name" value="TilS_C"/>
    <property type="match status" value="1"/>
</dbReference>
<dbReference type="SMART" id="SM00977">
    <property type="entry name" value="TilS_C"/>
    <property type="match status" value="1"/>
</dbReference>
<dbReference type="SUPFAM" id="SSF52402">
    <property type="entry name" value="Adenine nucleotide alpha hydrolases-like"/>
    <property type="match status" value="1"/>
</dbReference>
<dbReference type="SUPFAM" id="SSF56037">
    <property type="entry name" value="PheT/TilS domain"/>
    <property type="match status" value="1"/>
</dbReference>
<evidence type="ECO:0000255" key="1">
    <source>
        <dbReference type="HAMAP-Rule" id="MF_01161"/>
    </source>
</evidence>
<protein>
    <recommendedName>
        <fullName evidence="1">tRNA(Ile)-lysidine synthase</fullName>
        <ecNumber evidence="1">6.3.4.19</ecNumber>
    </recommendedName>
    <alternativeName>
        <fullName evidence="1">tRNA(Ile)-2-lysyl-cytidine synthase</fullName>
    </alternativeName>
    <alternativeName>
        <fullName evidence="1">tRNA(Ile)-lysidine synthetase</fullName>
    </alternativeName>
</protein>
<organism>
    <name type="scientific">Francisella philomiragia subsp. philomiragia (strain ATCC 25017 / CCUG 19701 / FSC 153 / O#319-036)</name>
    <dbReference type="NCBI Taxonomy" id="484022"/>
    <lineage>
        <taxon>Bacteria</taxon>
        <taxon>Pseudomonadati</taxon>
        <taxon>Pseudomonadota</taxon>
        <taxon>Gammaproteobacteria</taxon>
        <taxon>Thiotrichales</taxon>
        <taxon>Francisellaceae</taxon>
        <taxon>Francisella</taxon>
    </lineage>
</organism>
<name>TILS_FRAP2</name>
<gene>
    <name evidence="1" type="primary">tilS</name>
    <name type="ordered locus">Fphi_1430</name>
</gene>
<sequence length="400" mass="46261">MSLDKTQIISQILNHSPSHIIIGYSGGVDSSVLLDITKDLDIPTIAIYINHNIHPDALKWQLHCQTICNNANIDFIAHSLDQAPKGESFEAWASKQRMDFFIEIMSQYSSPILLLGHHLDDQAETFLIQAIRGSGLAGLASMPYYKQLNHGAVLRPLLDYTKKDIQDYASQNKINHIYDDSNENIKYRRNLIRNQIMPILEQINPNISRTLSRSAKICAESSNILQKLLNEKLQKISQNNSLIISELLSLDKDIQKSLIHHWFKETTNQSLKNKQTEEIHKALNNDIHTGWQFDINQQFQISVEYNQLIIKNNNQVDLILDNKDIIEWLKERFNKDFDTRELIVRQRQASDKCRYQGRDKANKLKVLFQELKIPTSERSKAKVILLNDKIIAVYPFFICD</sequence>
<keyword id="KW-0067">ATP-binding</keyword>
<keyword id="KW-0963">Cytoplasm</keyword>
<keyword id="KW-0436">Ligase</keyword>
<keyword id="KW-0547">Nucleotide-binding</keyword>
<keyword id="KW-0819">tRNA processing</keyword>
<accession>B0TYH9</accession>
<comment type="function">
    <text evidence="1">Ligates lysine onto the cytidine present at position 34 of the AUA codon-specific tRNA(Ile) that contains the anticodon CAU, in an ATP-dependent manner. Cytidine is converted to lysidine, thus changing the amino acid specificity of the tRNA from methionine to isoleucine.</text>
</comment>
<comment type="catalytic activity">
    <reaction evidence="1">
        <text>cytidine(34) in tRNA(Ile2) + L-lysine + ATP = lysidine(34) in tRNA(Ile2) + AMP + diphosphate + H(+)</text>
        <dbReference type="Rhea" id="RHEA:43744"/>
        <dbReference type="Rhea" id="RHEA-COMP:10625"/>
        <dbReference type="Rhea" id="RHEA-COMP:10670"/>
        <dbReference type="ChEBI" id="CHEBI:15378"/>
        <dbReference type="ChEBI" id="CHEBI:30616"/>
        <dbReference type="ChEBI" id="CHEBI:32551"/>
        <dbReference type="ChEBI" id="CHEBI:33019"/>
        <dbReference type="ChEBI" id="CHEBI:82748"/>
        <dbReference type="ChEBI" id="CHEBI:83665"/>
        <dbReference type="ChEBI" id="CHEBI:456215"/>
        <dbReference type="EC" id="6.3.4.19"/>
    </reaction>
</comment>
<comment type="subcellular location">
    <subcellularLocation>
        <location evidence="1">Cytoplasm</location>
    </subcellularLocation>
</comment>
<comment type="domain">
    <text>The N-terminal region contains the highly conserved SGGXDS motif, predicted to be a P-loop motif involved in ATP binding.</text>
</comment>
<comment type="similarity">
    <text evidence="1">Belongs to the tRNA(Ile)-lysidine synthase family.</text>
</comment>